<keyword id="KW-0002">3D-structure</keyword>
<keyword id="KW-0025">Alternative splicing</keyword>
<keyword id="KW-1015">Disulfide bond</keyword>
<keyword id="KW-0256">Endoplasmic reticulum</keyword>
<keyword id="KW-0472">Membrane</keyword>
<keyword id="KW-0496">Mitochondrion</keyword>
<keyword id="KW-0539">Nucleus</keyword>
<keyword id="KW-0597">Phosphoprotein</keyword>
<keyword id="KW-1267">Proteomics identification</keyword>
<keyword id="KW-1185">Reference proteome</keyword>
<keyword id="KW-0812">Transmembrane</keyword>
<keyword id="KW-1133">Transmembrane helix</keyword>
<gene>
    <name type="primary">CARD19</name>
    <name type="synonym">C9orf89</name>
</gene>
<dbReference type="EMBL" id="AK057716">
    <property type="protein sequence ID" value="BAB71550.1"/>
    <property type="molecule type" value="mRNA"/>
</dbReference>
<dbReference type="EMBL" id="AL451065">
    <property type="status" value="NOT_ANNOTATED_CDS"/>
    <property type="molecule type" value="Genomic_DNA"/>
</dbReference>
<dbReference type="EMBL" id="BC004500">
    <property type="protein sequence ID" value="AAH04500.1"/>
    <property type="molecule type" value="mRNA"/>
</dbReference>
<dbReference type="EMBL" id="BC038856">
    <property type="protein sequence ID" value="AAH38856.1"/>
    <property type="molecule type" value="mRNA"/>
</dbReference>
<dbReference type="CCDS" id="CCDS6702.2">
    <molecule id="Q96LW7-2"/>
</dbReference>
<dbReference type="RefSeq" id="NP_115686.3">
    <molecule id="Q96LW7-2"/>
    <property type="nucleotide sequence ID" value="NM_032310.4"/>
</dbReference>
<dbReference type="PDB" id="4DWN">
    <property type="method" value="X-ray"/>
    <property type="resolution" value="1.58 A"/>
    <property type="chains" value="A/B=3-99"/>
</dbReference>
<dbReference type="PDB" id="4FH0">
    <property type="method" value="X-ray"/>
    <property type="resolution" value="1.40 A"/>
    <property type="chains" value="A/B=3-101"/>
</dbReference>
<dbReference type="PDBsum" id="4DWN"/>
<dbReference type="PDBsum" id="4FH0"/>
<dbReference type="SMR" id="Q96LW7"/>
<dbReference type="BioGRID" id="123997">
    <property type="interactions" value="32"/>
</dbReference>
<dbReference type="FunCoup" id="Q96LW7">
    <property type="interactions" value="151"/>
</dbReference>
<dbReference type="IntAct" id="Q96LW7">
    <property type="interactions" value="18"/>
</dbReference>
<dbReference type="MINT" id="Q96LW7"/>
<dbReference type="STRING" id="9606.ENSP00000364613"/>
<dbReference type="iPTMnet" id="Q96LW7"/>
<dbReference type="PhosphoSitePlus" id="Q96LW7"/>
<dbReference type="BioMuta" id="CARD19"/>
<dbReference type="DMDM" id="71658794"/>
<dbReference type="jPOST" id="Q96LW7"/>
<dbReference type="MassIVE" id="Q96LW7"/>
<dbReference type="PaxDb" id="9606-ENSP00000364613"/>
<dbReference type="PeptideAtlas" id="Q96LW7"/>
<dbReference type="ProteomicsDB" id="77259">
    <molecule id="Q96LW7-1"/>
</dbReference>
<dbReference type="ProteomicsDB" id="77260">
    <molecule id="Q96LW7-2"/>
</dbReference>
<dbReference type="Pumba" id="Q96LW7"/>
<dbReference type="Antibodypedia" id="28349">
    <property type="antibodies" value="141 antibodies from 20 providers"/>
</dbReference>
<dbReference type="DNASU" id="84270"/>
<dbReference type="Ensembl" id="ENST00000375464.7">
    <molecule id="Q96LW7-2"/>
    <property type="protein sequence ID" value="ENSP00000364613.2"/>
    <property type="gene ID" value="ENSG00000165233.18"/>
</dbReference>
<dbReference type="Ensembl" id="ENST00000466409.1">
    <molecule id="Q96LW7-1"/>
    <property type="protein sequence ID" value="ENSP00000437237.1"/>
    <property type="gene ID" value="ENSG00000165233.18"/>
</dbReference>
<dbReference type="GeneID" id="84270"/>
<dbReference type="KEGG" id="hsa:84270"/>
<dbReference type="MANE-Select" id="ENST00000375464.7">
    <molecule id="Q96LW7-2"/>
    <property type="protein sequence ID" value="ENSP00000364613.2"/>
    <property type="RefSeq nucleotide sequence ID" value="NM_032310.5"/>
    <property type="RefSeq protein sequence ID" value="NP_115686.3"/>
</dbReference>
<dbReference type="UCSC" id="uc004atd.4">
    <molecule id="Q96LW7-1"/>
    <property type="organism name" value="human"/>
</dbReference>
<dbReference type="AGR" id="HGNC:28148"/>
<dbReference type="CTD" id="84270"/>
<dbReference type="DisGeNET" id="84270"/>
<dbReference type="GeneCards" id="CARD19"/>
<dbReference type="HGNC" id="HGNC:28148">
    <property type="gene designation" value="CARD19"/>
</dbReference>
<dbReference type="HPA" id="ENSG00000165233">
    <property type="expression patterns" value="Low tissue specificity"/>
</dbReference>
<dbReference type="MIM" id="617726">
    <property type="type" value="gene"/>
</dbReference>
<dbReference type="neXtProt" id="NX_Q96LW7"/>
<dbReference type="OpenTargets" id="ENSG00000165233"/>
<dbReference type="PharmGKB" id="PA134909664"/>
<dbReference type="VEuPathDB" id="HostDB:ENSG00000165233"/>
<dbReference type="GeneTree" id="ENSGT00390000016408"/>
<dbReference type="HOGENOM" id="CLU_103797_0_0_1"/>
<dbReference type="InParanoid" id="Q96LW7"/>
<dbReference type="OMA" id="ADSKCTN"/>
<dbReference type="OrthoDB" id="8810754at2759"/>
<dbReference type="PAN-GO" id="Q96LW7">
    <property type="GO annotations" value="1 GO annotation based on evolutionary models"/>
</dbReference>
<dbReference type="PhylomeDB" id="Q96LW7"/>
<dbReference type="TreeFam" id="TF335747"/>
<dbReference type="PathwayCommons" id="Q96LW7"/>
<dbReference type="SignaLink" id="Q96LW7"/>
<dbReference type="BioGRID-ORCS" id="84270">
    <property type="hits" value="14 hits in 1133 CRISPR screens"/>
</dbReference>
<dbReference type="ChiTaRS" id="CARD19">
    <property type="organism name" value="human"/>
</dbReference>
<dbReference type="EvolutionaryTrace" id="Q96LW7"/>
<dbReference type="GenomeRNAi" id="84270"/>
<dbReference type="Pharos" id="Q96LW7">
    <property type="development level" value="Tbio"/>
</dbReference>
<dbReference type="PRO" id="PR:Q96LW7"/>
<dbReference type="Proteomes" id="UP000005640">
    <property type="component" value="Chromosome 9"/>
</dbReference>
<dbReference type="RNAct" id="Q96LW7">
    <property type="molecule type" value="protein"/>
</dbReference>
<dbReference type="Bgee" id="ENSG00000165233">
    <property type="expression patterns" value="Expressed in monocyte and 174 other cell types or tissues"/>
</dbReference>
<dbReference type="ExpressionAtlas" id="Q96LW7">
    <property type="expression patterns" value="baseline and differential"/>
</dbReference>
<dbReference type="GO" id="GO:0005829">
    <property type="term" value="C:cytosol"/>
    <property type="evidence" value="ECO:0000303"/>
    <property type="project" value="UniProtKB"/>
</dbReference>
<dbReference type="GO" id="GO:0005789">
    <property type="term" value="C:endoplasmic reticulum membrane"/>
    <property type="evidence" value="ECO:0007669"/>
    <property type="project" value="UniProtKB-SubCell"/>
</dbReference>
<dbReference type="GO" id="GO:0031966">
    <property type="term" value="C:mitochondrial membrane"/>
    <property type="evidence" value="ECO:0007669"/>
    <property type="project" value="UniProtKB-SubCell"/>
</dbReference>
<dbReference type="GO" id="GO:0005739">
    <property type="term" value="C:mitochondrion"/>
    <property type="evidence" value="ECO:0000314"/>
    <property type="project" value="HPA"/>
</dbReference>
<dbReference type="GO" id="GO:0005634">
    <property type="term" value="C:nucleus"/>
    <property type="evidence" value="ECO:0000303"/>
    <property type="project" value="UniProtKB"/>
</dbReference>
<dbReference type="GO" id="GO:0050700">
    <property type="term" value="F:CARD domain binding"/>
    <property type="evidence" value="ECO:0000303"/>
    <property type="project" value="UniProtKB"/>
</dbReference>
<dbReference type="GO" id="GO:0043124">
    <property type="term" value="P:negative regulation of canonical NF-kappaB signal transduction"/>
    <property type="evidence" value="ECO:0000303"/>
    <property type="project" value="UniProtKB"/>
</dbReference>
<dbReference type="CDD" id="cd13785">
    <property type="entry name" value="CARD_BinCARD_like"/>
    <property type="match status" value="1"/>
</dbReference>
<dbReference type="FunFam" id="1.10.533.10:FF:000015">
    <property type="entry name" value="Caspase recruitment domain-containing protein 19"/>
    <property type="match status" value="1"/>
</dbReference>
<dbReference type="Gene3D" id="1.10.533.10">
    <property type="entry name" value="Death Domain, Fas"/>
    <property type="match status" value="1"/>
</dbReference>
<dbReference type="InterPro" id="IPR043574">
    <property type="entry name" value="CARD19"/>
</dbReference>
<dbReference type="InterPro" id="IPR042146">
    <property type="entry name" value="CARD_BinCARD"/>
</dbReference>
<dbReference type="InterPro" id="IPR011029">
    <property type="entry name" value="DEATH-like_dom_sf"/>
</dbReference>
<dbReference type="PANTHER" id="PTHR34765">
    <property type="entry name" value="CASPASE RECRUITMENT DOMAIN-CONTAINING PROTEIN 19"/>
    <property type="match status" value="1"/>
</dbReference>
<dbReference type="PANTHER" id="PTHR34765:SF1">
    <property type="entry name" value="CASPASE RECRUITMENT DOMAIN-CONTAINING PROTEIN 19"/>
    <property type="match status" value="1"/>
</dbReference>
<feature type="chain" id="PRO_0000064927" description="Caspase recruitment domain-containing protein 19">
    <location>
        <begin position="1"/>
        <end position="228"/>
    </location>
</feature>
<feature type="domain" description="CARD">
    <location>
        <begin position="8"/>
        <end position="99"/>
    </location>
</feature>
<feature type="disulfide bond" description="Redox-active" evidence="2">
    <location>
        <begin position="7"/>
        <end position="77"/>
    </location>
</feature>
<feature type="splice variant" id="VSP_014723" description="In isoform 2." evidence="3">
    <original>RKFHITNHACLVLARGGHPSLPLMAWMSSMTTQVCCSPGLASPLASAPPQRPPSGPEGRVWQAQAVQMLVSVSHFLPLPPSLSHGSFHTAWGILYVHSCPSFSNLIPRGSLHVCVDSNLVPTAAWRS</original>
    <variation>QNSDCTELDSGSQSGELSNRGPMSFLAGLGLAVGLALLLYCYPPDPKGLPGTRRVLGFSPVIIDRHVSRYLLAFLADDLGGL</variation>
    <location>
        <begin position="102"/>
        <end position="228"/>
    </location>
</feature>
<feature type="mutagenesis site" description="Abolishes the NF-kappa-B inhibitory activity." evidence="1">
    <original>L</original>
    <variation>A</variation>
    <location>
        <position position="17"/>
    </location>
</feature>
<feature type="mutagenesis site" description="Abolishes the NF-kappa-B inhibitory activity." evidence="1">
    <original>L</original>
    <variation>A</variation>
    <location>
        <position position="65"/>
    </location>
</feature>
<feature type="helix" evidence="7">
    <location>
        <begin position="6"/>
        <end position="17"/>
    </location>
</feature>
<feature type="helix" evidence="7">
    <location>
        <begin position="25"/>
        <end position="36"/>
    </location>
</feature>
<feature type="strand" evidence="7">
    <location>
        <begin position="37"/>
        <end position="40"/>
    </location>
</feature>
<feature type="helix" evidence="7">
    <location>
        <begin position="45"/>
        <end position="51"/>
    </location>
</feature>
<feature type="helix" evidence="7">
    <location>
        <begin position="58"/>
        <end position="72"/>
    </location>
</feature>
<feature type="helix" evidence="7">
    <location>
        <begin position="74"/>
        <end position="87"/>
    </location>
</feature>
<feature type="helix" evidence="7">
    <location>
        <begin position="89"/>
        <end position="94"/>
    </location>
</feature>
<feature type="helix" evidence="6">
    <location>
        <begin position="96"/>
        <end position="98"/>
    </location>
</feature>
<feature type="modified residue" description="Phosphoserine" evidence="5">
    <location sequence="Q96LW7-2">
        <position position="113"/>
    </location>
</feature>
<name>CAR19_HUMAN</name>
<sequence>MTDQTYCDRLVQDTPFLTGHGRLSEQQVDRIILQLNRYYPQILTNKEAEKFRNPKASLRVRLCDLLSHLQRSGERDCQEFYRALYIHAQPLHSRLPSRHALRKFHITNHACLVLARGGHPSLPLMAWMSSMTTQVCCSPGLASPLASAPPQRPPSGPEGRVWQAQAVQMLVSVSHFLPLPPSLSHGSFHTAWGILYVHSCPSFSNLIPRGSLHVCVDSNLVPTAAWRS</sequence>
<evidence type="ECO:0000269" key="1">
    <source>
    </source>
</evidence>
<evidence type="ECO:0000269" key="2">
    <source>
    </source>
</evidence>
<evidence type="ECO:0000303" key="3">
    <source>
    </source>
</evidence>
<evidence type="ECO:0000305" key="4"/>
<evidence type="ECO:0007744" key="5">
    <source>
    </source>
</evidence>
<evidence type="ECO:0007829" key="6">
    <source>
        <dbReference type="PDB" id="4DWN"/>
    </source>
</evidence>
<evidence type="ECO:0007829" key="7">
    <source>
        <dbReference type="PDB" id="4FH0"/>
    </source>
</evidence>
<proteinExistence type="evidence at protein level"/>
<accession>Q96LW7</accession>
<accession>Q5BJH8</accession>
<accession>Q9BSY2</accession>
<comment type="function">
    <text evidence="1">Plays a role in inhibiting the effects of BCL10-induced activation of NF-kappa-B. May inhibit the phosphorylation of BCL10 in a CARD-dependent manner.</text>
</comment>
<comment type="subunit">
    <text evidence="1">Associates with BCL10 by CARD-CARD interaction (PubMed:15637807).</text>
</comment>
<comment type="subcellular location">
    <molecule>Isoform 1</molecule>
    <subcellularLocation>
        <location evidence="2">Nucleus</location>
    </subcellularLocation>
    <text>Coexpression with BCL10 induced translocation from nucleus to cytosol.</text>
</comment>
<comment type="subcellular location">
    <molecule>Isoform 2</molecule>
    <subcellularLocation>
        <location evidence="2">Endoplasmic reticulum membrane</location>
        <topology evidence="2">Single-pass membrane protein</topology>
    </subcellularLocation>
    <subcellularLocation>
        <location evidence="2">Mitochondrion membrane</location>
        <topology evidence="2">Single-pass membrane protein</topology>
    </subcellularLocation>
</comment>
<comment type="alternative products">
    <event type="alternative splicing"/>
    <isoform>
        <id>Q96LW7-1</id>
        <name>1</name>
        <sequence type="displayed"/>
    </isoform>
    <isoform>
        <id>Q96LW7-2</id>
        <name>2</name>
        <sequence type="described" ref="VSP_014723"/>
    </isoform>
</comment>
<comment type="tissue specificity">
    <text evidence="1">Expressed in ovary, testis, placenta, skeletal muscle, kidney, lung, heart and liver (at protein level). Expressed in thymus and brain.</text>
</comment>
<comment type="miscellaneous">
    <molecule>Isoform 2</molecule>
    <text evidence="4">Appears to be the dominant isoform in peripheral blood cell fractions. Contains a transmembrane helix.</text>
</comment>
<protein>
    <recommendedName>
        <fullName>Caspase recruitment domain-containing protein 19</fullName>
    </recommendedName>
    <alternativeName>
        <fullName>Bcl10-interacting CARD protein</fullName>
        <shortName>BinCARD</shortName>
    </alternativeName>
</protein>
<organism>
    <name type="scientific">Homo sapiens</name>
    <name type="common">Human</name>
    <dbReference type="NCBI Taxonomy" id="9606"/>
    <lineage>
        <taxon>Eukaryota</taxon>
        <taxon>Metazoa</taxon>
        <taxon>Chordata</taxon>
        <taxon>Craniata</taxon>
        <taxon>Vertebrata</taxon>
        <taxon>Euteleostomi</taxon>
        <taxon>Mammalia</taxon>
        <taxon>Eutheria</taxon>
        <taxon>Euarchontoglires</taxon>
        <taxon>Primates</taxon>
        <taxon>Haplorrhini</taxon>
        <taxon>Catarrhini</taxon>
        <taxon>Hominidae</taxon>
        <taxon>Homo</taxon>
    </lineage>
</organism>
<reference key="1">
    <citation type="journal article" date="2004" name="Nat. Genet.">
        <title>Complete sequencing and characterization of 21,243 full-length human cDNAs.</title>
        <authorList>
            <person name="Ota T."/>
            <person name="Suzuki Y."/>
            <person name="Nishikawa T."/>
            <person name="Otsuki T."/>
            <person name="Sugiyama T."/>
            <person name="Irie R."/>
            <person name="Wakamatsu A."/>
            <person name="Hayashi K."/>
            <person name="Sato H."/>
            <person name="Nagai K."/>
            <person name="Kimura K."/>
            <person name="Makita H."/>
            <person name="Sekine M."/>
            <person name="Obayashi M."/>
            <person name="Nishi T."/>
            <person name="Shibahara T."/>
            <person name="Tanaka T."/>
            <person name="Ishii S."/>
            <person name="Yamamoto J."/>
            <person name="Saito K."/>
            <person name="Kawai Y."/>
            <person name="Isono Y."/>
            <person name="Nakamura Y."/>
            <person name="Nagahari K."/>
            <person name="Murakami K."/>
            <person name="Yasuda T."/>
            <person name="Iwayanagi T."/>
            <person name="Wagatsuma M."/>
            <person name="Shiratori A."/>
            <person name="Sudo H."/>
            <person name="Hosoiri T."/>
            <person name="Kaku Y."/>
            <person name="Kodaira H."/>
            <person name="Kondo H."/>
            <person name="Sugawara M."/>
            <person name="Takahashi M."/>
            <person name="Kanda K."/>
            <person name="Yokoi T."/>
            <person name="Furuya T."/>
            <person name="Kikkawa E."/>
            <person name="Omura Y."/>
            <person name="Abe K."/>
            <person name="Kamihara K."/>
            <person name="Katsuta N."/>
            <person name="Sato K."/>
            <person name="Tanikawa M."/>
            <person name="Yamazaki M."/>
            <person name="Ninomiya K."/>
            <person name="Ishibashi T."/>
            <person name="Yamashita H."/>
            <person name="Murakawa K."/>
            <person name="Fujimori K."/>
            <person name="Tanai H."/>
            <person name="Kimata M."/>
            <person name="Watanabe M."/>
            <person name="Hiraoka S."/>
            <person name="Chiba Y."/>
            <person name="Ishida S."/>
            <person name="Ono Y."/>
            <person name="Takiguchi S."/>
            <person name="Watanabe S."/>
            <person name="Yosida M."/>
            <person name="Hotuta T."/>
            <person name="Kusano J."/>
            <person name="Kanehori K."/>
            <person name="Takahashi-Fujii A."/>
            <person name="Hara H."/>
            <person name="Tanase T.-O."/>
            <person name="Nomura Y."/>
            <person name="Togiya S."/>
            <person name="Komai F."/>
            <person name="Hara R."/>
            <person name="Takeuchi K."/>
            <person name="Arita M."/>
            <person name="Imose N."/>
            <person name="Musashino K."/>
            <person name="Yuuki H."/>
            <person name="Oshima A."/>
            <person name="Sasaki N."/>
            <person name="Aotsuka S."/>
            <person name="Yoshikawa Y."/>
            <person name="Matsunawa H."/>
            <person name="Ichihara T."/>
            <person name="Shiohata N."/>
            <person name="Sano S."/>
            <person name="Moriya S."/>
            <person name="Momiyama H."/>
            <person name="Satoh N."/>
            <person name="Takami S."/>
            <person name="Terashima Y."/>
            <person name="Suzuki O."/>
            <person name="Nakagawa S."/>
            <person name="Senoh A."/>
            <person name="Mizoguchi H."/>
            <person name="Goto Y."/>
            <person name="Shimizu F."/>
            <person name="Wakebe H."/>
            <person name="Hishigaki H."/>
            <person name="Watanabe T."/>
            <person name="Sugiyama A."/>
            <person name="Takemoto M."/>
            <person name="Kawakami B."/>
            <person name="Yamazaki M."/>
            <person name="Watanabe K."/>
            <person name="Kumagai A."/>
            <person name="Itakura S."/>
            <person name="Fukuzumi Y."/>
            <person name="Fujimori Y."/>
            <person name="Komiyama M."/>
            <person name="Tashiro H."/>
            <person name="Tanigami A."/>
            <person name="Fujiwara T."/>
            <person name="Ono T."/>
            <person name="Yamada K."/>
            <person name="Fujii Y."/>
            <person name="Ozaki K."/>
            <person name="Hirao M."/>
            <person name="Ohmori Y."/>
            <person name="Kawabata A."/>
            <person name="Hikiji T."/>
            <person name="Kobatake N."/>
            <person name="Inagaki H."/>
            <person name="Ikema Y."/>
            <person name="Okamoto S."/>
            <person name="Okitani R."/>
            <person name="Kawakami T."/>
            <person name="Noguchi S."/>
            <person name="Itoh T."/>
            <person name="Shigeta K."/>
            <person name="Senba T."/>
            <person name="Matsumura K."/>
            <person name="Nakajima Y."/>
            <person name="Mizuno T."/>
            <person name="Morinaga M."/>
            <person name="Sasaki M."/>
            <person name="Togashi T."/>
            <person name="Oyama M."/>
            <person name="Hata H."/>
            <person name="Watanabe M."/>
            <person name="Komatsu T."/>
            <person name="Mizushima-Sugano J."/>
            <person name="Satoh T."/>
            <person name="Shirai Y."/>
            <person name="Takahashi Y."/>
            <person name="Nakagawa K."/>
            <person name="Okumura K."/>
            <person name="Nagase T."/>
            <person name="Nomura N."/>
            <person name="Kikuchi H."/>
            <person name="Masuho Y."/>
            <person name="Yamashita R."/>
            <person name="Nakai K."/>
            <person name="Yada T."/>
            <person name="Nakamura Y."/>
            <person name="Ohara O."/>
            <person name="Isogai T."/>
            <person name="Sugano S."/>
        </authorList>
    </citation>
    <scope>NUCLEOTIDE SEQUENCE [LARGE SCALE MRNA] (ISOFORM 1)</scope>
    <source>
        <tissue>Uterus</tissue>
    </source>
</reference>
<reference key="2">
    <citation type="journal article" date="2004" name="Nature">
        <title>DNA sequence and analysis of human chromosome 9.</title>
        <authorList>
            <person name="Humphray S.J."/>
            <person name="Oliver K."/>
            <person name="Hunt A.R."/>
            <person name="Plumb R.W."/>
            <person name="Loveland J.E."/>
            <person name="Howe K.L."/>
            <person name="Andrews T.D."/>
            <person name="Searle S."/>
            <person name="Hunt S.E."/>
            <person name="Scott C.E."/>
            <person name="Jones M.C."/>
            <person name="Ainscough R."/>
            <person name="Almeida J.P."/>
            <person name="Ambrose K.D."/>
            <person name="Ashwell R.I.S."/>
            <person name="Babbage A.K."/>
            <person name="Babbage S."/>
            <person name="Bagguley C.L."/>
            <person name="Bailey J."/>
            <person name="Banerjee R."/>
            <person name="Barker D.J."/>
            <person name="Barlow K.F."/>
            <person name="Bates K."/>
            <person name="Beasley H."/>
            <person name="Beasley O."/>
            <person name="Bird C.P."/>
            <person name="Bray-Allen S."/>
            <person name="Brown A.J."/>
            <person name="Brown J.Y."/>
            <person name="Burford D."/>
            <person name="Burrill W."/>
            <person name="Burton J."/>
            <person name="Carder C."/>
            <person name="Carter N.P."/>
            <person name="Chapman J.C."/>
            <person name="Chen Y."/>
            <person name="Clarke G."/>
            <person name="Clark S.Y."/>
            <person name="Clee C.M."/>
            <person name="Clegg S."/>
            <person name="Collier R.E."/>
            <person name="Corby N."/>
            <person name="Crosier M."/>
            <person name="Cummings A.T."/>
            <person name="Davies J."/>
            <person name="Dhami P."/>
            <person name="Dunn M."/>
            <person name="Dutta I."/>
            <person name="Dyer L.W."/>
            <person name="Earthrowl M.E."/>
            <person name="Faulkner L."/>
            <person name="Fleming C.J."/>
            <person name="Frankish A."/>
            <person name="Frankland J.A."/>
            <person name="French L."/>
            <person name="Fricker D.G."/>
            <person name="Garner P."/>
            <person name="Garnett J."/>
            <person name="Ghori J."/>
            <person name="Gilbert J.G.R."/>
            <person name="Glison C."/>
            <person name="Grafham D.V."/>
            <person name="Gribble S."/>
            <person name="Griffiths C."/>
            <person name="Griffiths-Jones S."/>
            <person name="Grocock R."/>
            <person name="Guy J."/>
            <person name="Hall R.E."/>
            <person name="Hammond S."/>
            <person name="Harley J.L."/>
            <person name="Harrison E.S.I."/>
            <person name="Hart E.A."/>
            <person name="Heath P.D."/>
            <person name="Henderson C.D."/>
            <person name="Hopkins B.L."/>
            <person name="Howard P.J."/>
            <person name="Howden P.J."/>
            <person name="Huckle E."/>
            <person name="Johnson C."/>
            <person name="Johnson D."/>
            <person name="Joy A.A."/>
            <person name="Kay M."/>
            <person name="Keenan S."/>
            <person name="Kershaw J.K."/>
            <person name="Kimberley A.M."/>
            <person name="King A."/>
            <person name="Knights A."/>
            <person name="Laird G.K."/>
            <person name="Langford C."/>
            <person name="Lawlor S."/>
            <person name="Leongamornlert D.A."/>
            <person name="Leversha M."/>
            <person name="Lloyd C."/>
            <person name="Lloyd D.M."/>
            <person name="Lovell J."/>
            <person name="Martin S."/>
            <person name="Mashreghi-Mohammadi M."/>
            <person name="Matthews L."/>
            <person name="McLaren S."/>
            <person name="McLay K.E."/>
            <person name="McMurray A."/>
            <person name="Milne S."/>
            <person name="Nickerson T."/>
            <person name="Nisbett J."/>
            <person name="Nordsiek G."/>
            <person name="Pearce A.V."/>
            <person name="Peck A.I."/>
            <person name="Porter K.M."/>
            <person name="Pandian R."/>
            <person name="Pelan S."/>
            <person name="Phillimore B."/>
            <person name="Povey S."/>
            <person name="Ramsey Y."/>
            <person name="Rand V."/>
            <person name="Scharfe M."/>
            <person name="Sehra H.K."/>
            <person name="Shownkeen R."/>
            <person name="Sims S.K."/>
            <person name="Skuce C.D."/>
            <person name="Smith M."/>
            <person name="Steward C.A."/>
            <person name="Swarbreck D."/>
            <person name="Sycamore N."/>
            <person name="Tester J."/>
            <person name="Thorpe A."/>
            <person name="Tracey A."/>
            <person name="Tromans A."/>
            <person name="Thomas D.W."/>
            <person name="Wall M."/>
            <person name="Wallis J.M."/>
            <person name="West A.P."/>
            <person name="Whitehead S.L."/>
            <person name="Willey D.L."/>
            <person name="Williams S.A."/>
            <person name="Wilming L."/>
            <person name="Wray P.W."/>
            <person name="Young L."/>
            <person name="Ashurst J.L."/>
            <person name="Coulson A."/>
            <person name="Blocker H."/>
            <person name="Durbin R.M."/>
            <person name="Sulston J.E."/>
            <person name="Hubbard T."/>
            <person name="Jackson M.J."/>
            <person name="Bentley D.R."/>
            <person name="Beck S."/>
            <person name="Rogers J."/>
            <person name="Dunham I."/>
        </authorList>
    </citation>
    <scope>NUCLEOTIDE SEQUENCE [LARGE SCALE GENOMIC DNA]</scope>
</reference>
<reference key="3">
    <citation type="journal article" date="2004" name="Genome Res.">
        <title>The status, quality, and expansion of the NIH full-length cDNA project: the Mammalian Gene Collection (MGC).</title>
        <authorList>
            <consortium name="The MGC Project Team"/>
        </authorList>
    </citation>
    <scope>NUCLEOTIDE SEQUENCE [LARGE SCALE MRNA] (ISOFORMS 1 AND 2)</scope>
    <source>
        <tissue>Leukocyte</tissue>
        <tissue>Skin</tissue>
    </source>
</reference>
<reference key="4">
    <citation type="journal article" date="2004" name="FEBS Lett.">
        <title>Inhibition of Bcl10-mediated activation of NF-kappa B by BinCARD, a Bcl10-interacting CARD protein.</title>
        <authorList>
            <person name="Woo H.-N."/>
            <person name="Hong G.-S."/>
            <person name="Jun J.-I."/>
            <person name="Cho D.-H."/>
            <person name="Choi H.-W."/>
            <person name="Lee H.-J."/>
            <person name="Chung C.-W."/>
            <person name="Kim I.-K."/>
            <person name="Jo D.-G."/>
            <person name="Pyo J.-O."/>
            <person name="Bertin J."/>
            <person name="Jung Y.-K."/>
        </authorList>
    </citation>
    <scope>FUNCTION</scope>
    <scope>SUBCELLULAR LOCATION</scope>
    <scope>TISSUE SPECIFICITY</scope>
    <scope>INTERACTION WITH BCL10</scope>
    <scope>MUTAGENESIS OF LEU-17 AND LEU-65</scope>
</reference>
<reference key="5">
    <citation type="journal article" date="2007" name="Science">
        <title>ATM and ATR substrate analysis reveals extensive protein networks responsive to DNA damage.</title>
        <authorList>
            <person name="Matsuoka S."/>
            <person name="Ballif B.A."/>
            <person name="Smogorzewska A."/>
            <person name="McDonald E.R. III"/>
            <person name="Hurov K.E."/>
            <person name="Luo J."/>
            <person name="Bakalarski C.E."/>
            <person name="Zhao Z."/>
            <person name="Solimini N."/>
            <person name="Lerenthal Y."/>
            <person name="Shiloh Y."/>
            <person name="Gygi S.P."/>
            <person name="Elledge S.J."/>
        </authorList>
    </citation>
    <scope>IDENTIFICATION BY MASS SPECTROMETRY [LARGE SCALE ANALYSIS]</scope>
    <source>
        <tissue>Embryonic kidney</tissue>
    </source>
</reference>
<reference key="6">
    <citation type="journal article" date="2014" name="J. Proteomics">
        <title>An enzyme assisted RP-RPLC approach for in-depth analysis of human liver phosphoproteome.</title>
        <authorList>
            <person name="Bian Y."/>
            <person name="Song C."/>
            <person name="Cheng K."/>
            <person name="Dong M."/>
            <person name="Wang F."/>
            <person name="Huang J."/>
            <person name="Sun D."/>
            <person name="Wang L."/>
            <person name="Ye M."/>
            <person name="Zou H."/>
        </authorList>
    </citation>
    <scope>PHOSPHORYLATION [LARGE SCALE ANALYSIS] AT SER-113 (ISOFORM 2)</scope>
    <scope>IDENTIFICATION BY MASS SPECTROMETRY [LARGE SCALE ANALYSIS]</scope>
    <source>
        <tissue>Liver</tissue>
    </source>
</reference>
<reference key="7">
    <citation type="journal article" date="2013" name="Acta Crystallogr. D">
        <title>The structure of the caspase recruitment domain of BinCARD reveals that all three cysteines can be oxidized.</title>
        <authorList>
            <person name="Chen K.E."/>
            <person name="Richards A.A."/>
            <person name="Caradoc-Davies T.T."/>
            <person name="Vajjhala P.R."/>
            <person name="Robin G."/>
            <person name="Lua L.H."/>
            <person name="Hill J.M."/>
            <person name="Schroder K."/>
            <person name="Sweet M.J."/>
            <person name="Kellie S."/>
            <person name="Kobe B."/>
            <person name="Martin J."/>
        </authorList>
    </citation>
    <scope>X-RAY CRYSTALLOGRAPHY (1.4 ANGSTROMS) OF 3-101 OF MUTANT MET-16 AND MET-66</scope>
    <scope>ALTERNATIVE SPLICING</scope>
    <scope>DISULFIDE BOND</scope>
    <scope>SUBCELLULAR LOCATION (ISOFORMS 1 AND 2)</scope>
</reference>